<evidence type="ECO:0000255" key="1">
    <source>
        <dbReference type="HAMAP-Rule" id="MF_01154"/>
    </source>
</evidence>
<gene>
    <name evidence="1" type="primary">cbpA</name>
    <name type="ordered locus">E2348C_1051</name>
</gene>
<accession>B7UNY3</accession>
<proteinExistence type="inferred from homology"/>
<dbReference type="EMBL" id="FM180568">
    <property type="protein sequence ID" value="CAS08599.1"/>
    <property type="molecule type" value="Genomic_DNA"/>
</dbReference>
<dbReference type="RefSeq" id="WP_000420625.1">
    <property type="nucleotide sequence ID" value="NC_011601.1"/>
</dbReference>
<dbReference type="SMR" id="B7UNY3"/>
<dbReference type="KEGG" id="ecg:E2348C_1051"/>
<dbReference type="HOGENOM" id="CLU_017633_0_0_6"/>
<dbReference type="Proteomes" id="UP000008205">
    <property type="component" value="Chromosome"/>
</dbReference>
<dbReference type="GO" id="GO:0005737">
    <property type="term" value="C:cytoplasm"/>
    <property type="evidence" value="ECO:0007669"/>
    <property type="project" value="UniProtKB-UniRule"/>
</dbReference>
<dbReference type="GO" id="GO:0009295">
    <property type="term" value="C:nucleoid"/>
    <property type="evidence" value="ECO:0007669"/>
    <property type="project" value="UniProtKB-SubCell"/>
</dbReference>
<dbReference type="GO" id="GO:0003681">
    <property type="term" value="F:bent DNA binding"/>
    <property type="evidence" value="ECO:0007669"/>
    <property type="project" value="UniProtKB-UniRule"/>
</dbReference>
<dbReference type="GO" id="GO:0051082">
    <property type="term" value="F:unfolded protein binding"/>
    <property type="evidence" value="ECO:0007669"/>
    <property type="project" value="InterPro"/>
</dbReference>
<dbReference type="GO" id="GO:0051085">
    <property type="term" value="P:chaperone cofactor-dependent protein refolding"/>
    <property type="evidence" value="ECO:0007669"/>
    <property type="project" value="TreeGrafter"/>
</dbReference>
<dbReference type="GO" id="GO:0042026">
    <property type="term" value="P:protein refolding"/>
    <property type="evidence" value="ECO:0007669"/>
    <property type="project" value="TreeGrafter"/>
</dbReference>
<dbReference type="CDD" id="cd06257">
    <property type="entry name" value="DnaJ"/>
    <property type="match status" value="1"/>
</dbReference>
<dbReference type="CDD" id="cd10747">
    <property type="entry name" value="DnaJ_C"/>
    <property type="match status" value="1"/>
</dbReference>
<dbReference type="FunFam" id="1.10.287.110:FF:000013">
    <property type="entry name" value="Curved DNA-binding protein"/>
    <property type="match status" value="1"/>
</dbReference>
<dbReference type="FunFam" id="2.60.260.20:FF:000008">
    <property type="entry name" value="Curved DNA-binding protein"/>
    <property type="match status" value="1"/>
</dbReference>
<dbReference type="FunFam" id="2.60.260.20:FF:000013">
    <property type="entry name" value="DnaJ subfamily B member 11"/>
    <property type="match status" value="1"/>
</dbReference>
<dbReference type="Gene3D" id="1.10.287.110">
    <property type="entry name" value="DnaJ domain"/>
    <property type="match status" value="1"/>
</dbReference>
<dbReference type="Gene3D" id="1.20.5.460">
    <property type="entry name" value="Single helix bin"/>
    <property type="match status" value="1"/>
</dbReference>
<dbReference type="Gene3D" id="2.60.260.20">
    <property type="entry name" value="Urease metallochaperone UreE, N-terminal domain"/>
    <property type="match status" value="2"/>
</dbReference>
<dbReference type="HAMAP" id="MF_01154">
    <property type="entry name" value="CbpA"/>
    <property type="match status" value="1"/>
</dbReference>
<dbReference type="InterPro" id="IPR023859">
    <property type="entry name" value="DNA-bd_curved-DNA"/>
</dbReference>
<dbReference type="InterPro" id="IPR002939">
    <property type="entry name" value="DnaJ_C"/>
</dbReference>
<dbReference type="InterPro" id="IPR001623">
    <property type="entry name" value="DnaJ_domain"/>
</dbReference>
<dbReference type="InterPro" id="IPR018253">
    <property type="entry name" value="DnaJ_domain_CS"/>
</dbReference>
<dbReference type="InterPro" id="IPR008971">
    <property type="entry name" value="HSP40/DnaJ_pept-bd"/>
</dbReference>
<dbReference type="InterPro" id="IPR036869">
    <property type="entry name" value="J_dom_sf"/>
</dbReference>
<dbReference type="NCBIfam" id="NF007618">
    <property type="entry name" value="PRK10266.1"/>
    <property type="match status" value="1"/>
</dbReference>
<dbReference type="PANTHER" id="PTHR43096">
    <property type="entry name" value="DNAJ HOMOLOG 1, MITOCHONDRIAL-RELATED"/>
    <property type="match status" value="1"/>
</dbReference>
<dbReference type="PANTHER" id="PTHR43096:SF52">
    <property type="entry name" value="DNAJ HOMOLOG 1, MITOCHONDRIAL-RELATED"/>
    <property type="match status" value="1"/>
</dbReference>
<dbReference type="Pfam" id="PF00226">
    <property type="entry name" value="DnaJ"/>
    <property type="match status" value="1"/>
</dbReference>
<dbReference type="Pfam" id="PF01556">
    <property type="entry name" value="DnaJ_C"/>
    <property type="match status" value="1"/>
</dbReference>
<dbReference type="PRINTS" id="PR00625">
    <property type="entry name" value="JDOMAIN"/>
</dbReference>
<dbReference type="SMART" id="SM00271">
    <property type="entry name" value="DnaJ"/>
    <property type="match status" value="1"/>
</dbReference>
<dbReference type="SUPFAM" id="SSF46565">
    <property type="entry name" value="Chaperone J-domain"/>
    <property type="match status" value="1"/>
</dbReference>
<dbReference type="SUPFAM" id="SSF49493">
    <property type="entry name" value="HSP40/DnaJ peptide-binding domain"/>
    <property type="match status" value="2"/>
</dbReference>
<dbReference type="PROSITE" id="PS00636">
    <property type="entry name" value="DNAJ_1"/>
    <property type="match status" value="1"/>
</dbReference>
<dbReference type="PROSITE" id="PS50076">
    <property type="entry name" value="DNAJ_2"/>
    <property type="match status" value="1"/>
</dbReference>
<sequence length="306" mass="34485">MELKDYYAIMGVKPTDDLKTIKTAYRRLARKYHPDVSKEPDAEARFKEVAEAWEVLSDEQRRAEYDQMWQHRNDPQFNRQFHHGDGQSFNAEDFDDIFSSIFGQHARQSRQRPATRGHDIEIEVAVFLEETLTEHKRTISYNLPVYNAFGMIEQEIPKTLNVKIPAGVGNGQRIRLKGQGTPGENGGPNGDLWLVIHIAPHPLFDIVGQDLEIVVPVSPWEAALGTKVTVPTLKESILLTIPPGSQAGQRLRVKGKGLVSKKQTGDLYAVLKIVMPPKPDENTAALWQQLADAQSSFDPRKDWGKA</sequence>
<keyword id="KW-0143">Chaperone</keyword>
<keyword id="KW-0963">Cytoplasm</keyword>
<keyword id="KW-0238">DNA-binding</keyword>
<keyword id="KW-1185">Reference proteome</keyword>
<comment type="function">
    <text evidence="1">DNA-binding protein that preferentially recognizes a curved DNA sequence. It is probably a functional analog of DnaJ; displays overlapping activities with DnaJ, but functions under different conditions, probably acting as a molecular chaperone in an adaptive response to environmental stresses other than heat shock. Lacks autonomous chaperone activity; binds native substrates and targets them for recognition by DnaK. Its activity is inhibited by the binding of CbpM.</text>
</comment>
<comment type="subcellular location">
    <subcellularLocation>
        <location evidence="1">Cytoplasm</location>
        <location evidence="1">Nucleoid</location>
    </subcellularLocation>
</comment>
<name>CBPA_ECO27</name>
<feature type="chain" id="PRO_1000164286" description="Curved DNA-binding protein">
    <location>
        <begin position="1"/>
        <end position="306"/>
    </location>
</feature>
<feature type="domain" description="J" evidence="1">
    <location>
        <begin position="5"/>
        <end position="69"/>
    </location>
</feature>
<reference key="1">
    <citation type="journal article" date="2009" name="J. Bacteriol.">
        <title>Complete genome sequence and comparative genome analysis of enteropathogenic Escherichia coli O127:H6 strain E2348/69.</title>
        <authorList>
            <person name="Iguchi A."/>
            <person name="Thomson N.R."/>
            <person name="Ogura Y."/>
            <person name="Saunders D."/>
            <person name="Ooka T."/>
            <person name="Henderson I.R."/>
            <person name="Harris D."/>
            <person name="Asadulghani M."/>
            <person name="Kurokawa K."/>
            <person name="Dean P."/>
            <person name="Kenny B."/>
            <person name="Quail M.A."/>
            <person name="Thurston S."/>
            <person name="Dougan G."/>
            <person name="Hayashi T."/>
            <person name="Parkhill J."/>
            <person name="Frankel G."/>
        </authorList>
    </citation>
    <scope>NUCLEOTIDE SEQUENCE [LARGE SCALE GENOMIC DNA]</scope>
    <source>
        <strain>E2348/69 / EPEC</strain>
    </source>
</reference>
<protein>
    <recommendedName>
        <fullName evidence="1">Curved DNA-binding protein</fullName>
    </recommendedName>
</protein>
<organism>
    <name type="scientific">Escherichia coli O127:H6 (strain E2348/69 / EPEC)</name>
    <dbReference type="NCBI Taxonomy" id="574521"/>
    <lineage>
        <taxon>Bacteria</taxon>
        <taxon>Pseudomonadati</taxon>
        <taxon>Pseudomonadota</taxon>
        <taxon>Gammaproteobacteria</taxon>
        <taxon>Enterobacterales</taxon>
        <taxon>Enterobacteriaceae</taxon>
        <taxon>Escherichia</taxon>
    </lineage>
</organism>